<feature type="chain" id="PRO_0000131508" description="Small ribosomal subunit protein uS5">
    <location>
        <begin position="1"/>
        <end position="196"/>
    </location>
</feature>
<feature type="domain" description="S5 DRBM" evidence="1">
    <location>
        <begin position="17"/>
        <end position="80"/>
    </location>
</feature>
<feature type="region of interest" description="Disordered" evidence="2">
    <location>
        <begin position="164"/>
        <end position="196"/>
    </location>
</feature>
<feature type="compositionally biased region" description="Polar residues" evidence="2">
    <location>
        <begin position="170"/>
        <end position="183"/>
    </location>
</feature>
<gene>
    <name evidence="1" type="primary">rpsE</name>
    <name type="ordered locus">DR_2113</name>
</gene>
<name>RS5_DEIRA</name>
<protein>
    <recommendedName>
        <fullName evidence="1">Small ribosomal subunit protein uS5</fullName>
    </recommendedName>
    <alternativeName>
        <fullName evidence="3">30S ribosomal protein S5</fullName>
    </alternativeName>
</protein>
<accession>Q9RSL1</accession>
<organism>
    <name type="scientific">Deinococcus radiodurans (strain ATCC 13939 / DSM 20539 / JCM 16871 / CCUG 27074 / LMG 4051 / NBRC 15346 / NCIMB 9279 / VKM B-1422 / R1)</name>
    <dbReference type="NCBI Taxonomy" id="243230"/>
    <lineage>
        <taxon>Bacteria</taxon>
        <taxon>Thermotogati</taxon>
        <taxon>Deinococcota</taxon>
        <taxon>Deinococci</taxon>
        <taxon>Deinococcales</taxon>
        <taxon>Deinococcaceae</taxon>
        <taxon>Deinococcus</taxon>
    </lineage>
</organism>
<proteinExistence type="inferred from homology"/>
<evidence type="ECO:0000255" key="1">
    <source>
        <dbReference type="HAMAP-Rule" id="MF_01307"/>
    </source>
</evidence>
<evidence type="ECO:0000256" key="2">
    <source>
        <dbReference type="SAM" id="MobiDB-lite"/>
    </source>
</evidence>
<evidence type="ECO:0000305" key="3"/>
<dbReference type="EMBL" id="AE000513">
    <property type="protein sequence ID" value="AAF11662.1"/>
    <property type="molecule type" value="Genomic_DNA"/>
</dbReference>
<dbReference type="PIR" id="D75314">
    <property type="entry name" value="D75314"/>
</dbReference>
<dbReference type="RefSeq" id="NP_295836.1">
    <property type="nucleotide sequence ID" value="NC_001263.1"/>
</dbReference>
<dbReference type="SMR" id="Q9RSL1"/>
<dbReference type="FunCoup" id="Q9RSL1">
    <property type="interactions" value="519"/>
</dbReference>
<dbReference type="STRING" id="243230.DR_2113"/>
<dbReference type="PaxDb" id="243230-DR_2113"/>
<dbReference type="EnsemblBacteria" id="AAF11662">
    <property type="protein sequence ID" value="AAF11662"/>
    <property type="gene ID" value="DR_2113"/>
</dbReference>
<dbReference type="KEGG" id="dra:DR_2113"/>
<dbReference type="PATRIC" id="fig|243230.17.peg.2336"/>
<dbReference type="eggNOG" id="COG0098">
    <property type="taxonomic scope" value="Bacteria"/>
</dbReference>
<dbReference type="HOGENOM" id="CLU_065898_2_2_0"/>
<dbReference type="InParanoid" id="Q9RSL1"/>
<dbReference type="OrthoDB" id="9809045at2"/>
<dbReference type="Proteomes" id="UP000002524">
    <property type="component" value="Chromosome 1"/>
</dbReference>
<dbReference type="GO" id="GO:0022627">
    <property type="term" value="C:cytosolic small ribosomal subunit"/>
    <property type="evidence" value="ECO:0000318"/>
    <property type="project" value="GO_Central"/>
</dbReference>
<dbReference type="GO" id="GO:0019843">
    <property type="term" value="F:rRNA binding"/>
    <property type="evidence" value="ECO:0007669"/>
    <property type="project" value="UniProtKB-UniRule"/>
</dbReference>
<dbReference type="GO" id="GO:0003735">
    <property type="term" value="F:structural constituent of ribosome"/>
    <property type="evidence" value="ECO:0000318"/>
    <property type="project" value="GO_Central"/>
</dbReference>
<dbReference type="GO" id="GO:0006412">
    <property type="term" value="P:translation"/>
    <property type="evidence" value="ECO:0000318"/>
    <property type="project" value="GO_Central"/>
</dbReference>
<dbReference type="FunFam" id="3.30.160.20:FF:000066">
    <property type="entry name" value="30S ribosomal protein S5"/>
    <property type="match status" value="1"/>
</dbReference>
<dbReference type="FunFam" id="3.30.230.10:FF:000002">
    <property type="entry name" value="30S ribosomal protein S5"/>
    <property type="match status" value="1"/>
</dbReference>
<dbReference type="Gene3D" id="3.30.160.20">
    <property type="match status" value="1"/>
</dbReference>
<dbReference type="Gene3D" id="3.30.230.10">
    <property type="match status" value="1"/>
</dbReference>
<dbReference type="HAMAP" id="MF_01307_B">
    <property type="entry name" value="Ribosomal_uS5_B"/>
    <property type="match status" value="1"/>
</dbReference>
<dbReference type="InterPro" id="IPR020568">
    <property type="entry name" value="Ribosomal_Su5_D2-typ_SF"/>
</dbReference>
<dbReference type="InterPro" id="IPR000851">
    <property type="entry name" value="Ribosomal_uS5"/>
</dbReference>
<dbReference type="InterPro" id="IPR005712">
    <property type="entry name" value="Ribosomal_uS5_bac-type"/>
</dbReference>
<dbReference type="InterPro" id="IPR005324">
    <property type="entry name" value="Ribosomal_uS5_C"/>
</dbReference>
<dbReference type="InterPro" id="IPR013810">
    <property type="entry name" value="Ribosomal_uS5_N"/>
</dbReference>
<dbReference type="InterPro" id="IPR018192">
    <property type="entry name" value="Ribosomal_uS5_N_CS"/>
</dbReference>
<dbReference type="InterPro" id="IPR014721">
    <property type="entry name" value="Ribsml_uS5_D2-typ_fold_subgr"/>
</dbReference>
<dbReference type="NCBIfam" id="TIGR01021">
    <property type="entry name" value="rpsE_bact"/>
    <property type="match status" value="1"/>
</dbReference>
<dbReference type="PANTHER" id="PTHR48277">
    <property type="entry name" value="MITOCHONDRIAL RIBOSOMAL PROTEIN S5"/>
    <property type="match status" value="1"/>
</dbReference>
<dbReference type="PANTHER" id="PTHR48277:SF1">
    <property type="entry name" value="MITOCHONDRIAL RIBOSOMAL PROTEIN S5"/>
    <property type="match status" value="1"/>
</dbReference>
<dbReference type="Pfam" id="PF00333">
    <property type="entry name" value="Ribosomal_S5"/>
    <property type="match status" value="1"/>
</dbReference>
<dbReference type="Pfam" id="PF03719">
    <property type="entry name" value="Ribosomal_S5_C"/>
    <property type="match status" value="1"/>
</dbReference>
<dbReference type="SUPFAM" id="SSF54768">
    <property type="entry name" value="dsRNA-binding domain-like"/>
    <property type="match status" value="1"/>
</dbReference>
<dbReference type="SUPFAM" id="SSF54211">
    <property type="entry name" value="Ribosomal protein S5 domain 2-like"/>
    <property type="match status" value="1"/>
</dbReference>
<dbReference type="PROSITE" id="PS00585">
    <property type="entry name" value="RIBOSOMAL_S5"/>
    <property type="match status" value="1"/>
</dbReference>
<dbReference type="PROSITE" id="PS50881">
    <property type="entry name" value="S5_DSRBD"/>
    <property type="match status" value="1"/>
</dbReference>
<keyword id="KW-1185">Reference proteome</keyword>
<keyword id="KW-0687">Ribonucleoprotein</keyword>
<keyword id="KW-0689">Ribosomal protein</keyword>
<keyword id="KW-0694">RNA-binding</keyword>
<keyword id="KW-0699">rRNA-binding</keyword>
<sequence length="196" mass="20977">MALTFNRRNDRTESSEFEEKMLFVNRTSKTYQGGRRFRFAALVILGDRNGRVGMGIGKAKEVPVAIEKAKAVARKNMITVPVENGTIPHEIVGENSTSRVLLKPAGPGTGVIAGTVPRSIAELAGITNMLSKELGSRNKVNVAYAVFDGFKNLRTAKQVRNLRGTEVRPSLSSDSPAGRSATTEAGEGVADTGGMQ</sequence>
<comment type="function">
    <text evidence="1">With S4 and S12 plays an important role in translational accuracy.</text>
</comment>
<comment type="function">
    <text evidence="1">Located at the back of the 30S subunit body where it stabilizes the conformation of the head with respect to the body.</text>
</comment>
<comment type="subunit">
    <text evidence="1">Part of the 30S ribosomal subunit. Contacts proteins S4 and S8.</text>
</comment>
<comment type="domain">
    <text>The N-terminal domain interacts with the head of the 30S subunit; the C-terminal domain interacts with the body and contacts protein S4. The interaction surface between S4 and S5 is involved in control of translational fidelity.</text>
</comment>
<comment type="similarity">
    <text evidence="1">Belongs to the universal ribosomal protein uS5 family.</text>
</comment>
<reference key="1">
    <citation type="journal article" date="1999" name="Science">
        <title>Genome sequence of the radioresistant bacterium Deinococcus radiodurans R1.</title>
        <authorList>
            <person name="White O."/>
            <person name="Eisen J.A."/>
            <person name="Heidelberg J.F."/>
            <person name="Hickey E.K."/>
            <person name="Peterson J.D."/>
            <person name="Dodson R.J."/>
            <person name="Haft D.H."/>
            <person name="Gwinn M.L."/>
            <person name="Nelson W.C."/>
            <person name="Richardson D.L."/>
            <person name="Moffat K.S."/>
            <person name="Qin H."/>
            <person name="Jiang L."/>
            <person name="Pamphile W."/>
            <person name="Crosby M."/>
            <person name="Shen M."/>
            <person name="Vamathevan J.J."/>
            <person name="Lam P."/>
            <person name="McDonald L.A."/>
            <person name="Utterback T.R."/>
            <person name="Zalewski C."/>
            <person name="Makarova K.S."/>
            <person name="Aravind L."/>
            <person name="Daly M.J."/>
            <person name="Minton K.W."/>
            <person name="Fleischmann R.D."/>
            <person name="Ketchum K.A."/>
            <person name="Nelson K.E."/>
            <person name="Salzberg S.L."/>
            <person name="Smith H.O."/>
            <person name="Venter J.C."/>
            <person name="Fraser C.M."/>
        </authorList>
    </citation>
    <scope>NUCLEOTIDE SEQUENCE [LARGE SCALE GENOMIC DNA]</scope>
    <source>
        <strain>ATCC 13939 / DSM 20539 / JCM 16871 / CCUG 27074 / LMG 4051 / NBRC 15346 / NCIMB 9279 / VKM B-1422 / R1</strain>
    </source>
</reference>